<comment type="function">
    <text evidence="2">Sulphite efflux pump required for the secretion of sulphite as a reducing agent. In the presence of sulphite, cystine in keratin is directly cleaved to cysteine and S-sulphocysteine, and thereby, reduced proteins become accessible to hydrolysis by a variety of secreted endo- and exoproteases. Excretion of sulphite mediated by an efflux pump also represents a detoxification pathway for dermatophytes during infection of the epidermal stratum corneum, hair and nails, which are rich in cysteine.</text>
</comment>
<comment type="subcellular location">
    <subcellularLocation>
        <location evidence="3">Cell membrane</location>
        <topology evidence="3">Multi-pass membrane protein</topology>
    </subcellularLocation>
</comment>
<comment type="induction">
    <text evidence="2">Expression is strongly increased during growth on protein rich medium containing keratin or cystine-arginine.</text>
</comment>
<comment type="similarity">
    <text evidence="3">Belongs to the tellurite-resistance/dicarboxylate transporter (TDT) family.</text>
</comment>
<protein>
    <recommendedName>
        <fullName>Sulfite efflux pump SSU1</fullName>
    </recommendedName>
</protein>
<gene>
    <name type="primary">SSU1</name>
</gene>
<evidence type="ECO:0000255" key="1"/>
<evidence type="ECO:0000269" key="2">
    <source>
    </source>
</evidence>
<evidence type="ECO:0000305" key="3"/>
<proteinExistence type="evidence at transcript level"/>
<organism>
    <name type="scientific">Trichophyton rubrum</name>
    <name type="common">Athlete's foot fungus</name>
    <name type="synonym">Epidermophyton rubrum</name>
    <dbReference type="NCBI Taxonomy" id="5551"/>
    <lineage>
        <taxon>Eukaryota</taxon>
        <taxon>Fungi</taxon>
        <taxon>Dikarya</taxon>
        <taxon>Ascomycota</taxon>
        <taxon>Pezizomycotina</taxon>
        <taxon>Eurotiomycetes</taxon>
        <taxon>Eurotiomycetidae</taxon>
        <taxon>Onygenales</taxon>
        <taxon>Arthrodermataceae</taxon>
        <taxon>Trichophyton</taxon>
    </lineage>
</organism>
<reference key="1">
    <citation type="journal article" date="2007" name="Microbiology">
        <title>Sulphite efflux pumps in Aspergillus fumigatus and dermatophytes.</title>
        <authorList>
            <person name="Lechenne B."/>
            <person name="Reichard U."/>
            <person name="Zaugg C."/>
            <person name="Fratti M."/>
            <person name="Kunert J."/>
            <person name="Boulat O."/>
            <person name="Monod M."/>
        </authorList>
    </citation>
    <scope>NUCLEOTIDE SEQUENCE [MRNA]</scope>
    <scope>FUNCTION</scope>
    <scope>INDUCTION</scope>
</reference>
<keyword id="KW-1003">Cell membrane</keyword>
<keyword id="KW-0325">Glycoprotein</keyword>
<keyword id="KW-0472">Membrane</keyword>
<keyword id="KW-0812">Transmembrane</keyword>
<keyword id="KW-1133">Transmembrane helix</keyword>
<keyword id="KW-0813">Transport</keyword>
<feature type="chain" id="PRO_0000384415" description="Sulfite efflux pump SSU1">
    <location>
        <begin position="1"/>
        <end position="375"/>
    </location>
</feature>
<feature type="topological domain" description="Cytoplasmic" evidence="1">
    <location>
        <begin position="1"/>
        <end position="25"/>
    </location>
</feature>
<feature type="transmembrane region" description="Helical" evidence="1">
    <location>
        <begin position="26"/>
        <end position="46"/>
    </location>
</feature>
<feature type="topological domain" description="Extracellular" evidence="1">
    <location>
        <begin position="47"/>
        <end position="59"/>
    </location>
</feature>
<feature type="transmembrane region" description="Helical" evidence="1">
    <location>
        <begin position="60"/>
        <end position="80"/>
    </location>
</feature>
<feature type="topological domain" description="Cytoplasmic" evidence="1">
    <location>
        <begin position="81"/>
        <end position="101"/>
    </location>
</feature>
<feature type="transmembrane region" description="Helical" evidence="1">
    <location>
        <begin position="102"/>
        <end position="122"/>
    </location>
</feature>
<feature type="topological domain" description="Extracellular" evidence="1">
    <location>
        <begin position="123"/>
        <end position="135"/>
    </location>
</feature>
<feature type="transmembrane region" description="Helical" evidence="1">
    <location>
        <begin position="136"/>
        <end position="156"/>
    </location>
</feature>
<feature type="topological domain" description="Cytoplasmic" evidence="1">
    <location>
        <begin position="157"/>
        <end position="167"/>
    </location>
</feature>
<feature type="transmembrane region" description="Helical" evidence="1">
    <location>
        <begin position="168"/>
        <end position="188"/>
    </location>
</feature>
<feature type="topological domain" description="Extracellular" evidence="1">
    <location>
        <begin position="189"/>
        <end position="200"/>
    </location>
</feature>
<feature type="transmembrane region" description="Helical" evidence="1">
    <location>
        <begin position="201"/>
        <end position="221"/>
    </location>
</feature>
<feature type="topological domain" description="Cytoplasmic" evidence="1">
    <location>
        <begin position="222"/>
        <end position="234"/>
    </location>
</feature>
<feature type="transmembrane region" description="Helical" evidence="1">
    <location>
        <begin position="235"/>
        <end position="255"/>
    </location>
</feature>
<feature type="topological domain" description="Extracellular" evidence="1">
    <location>
        <begin position="256"/>
        <end position="277"/>
    </location>
</feature>
<feature type="transmembrane region" description="Helical" evidence="1">
    <location>
        <begin position="278"/>
        <end position="298"/>
    </location>
</feature>
<feature type="topological domain" description="Cytoplasmic" evidence="1">
    <location>
        <begin position="299"/>
        <end position="309"/>
    </location>
</feature>
<feature type="transmembrane region" description="Helical" evidence="1">
    <location>
        <begin position="310"/>
        <end position="330"/>
    </location>
</feature>
<feature type="topological domain" description="Extracellular" evidence="1">
    <location>
        <begin position="331"/>
        <end position="343"/>
    </location>
</feature>
<feature type="transmembrane region" description="Helical" evidence="1">
    <location>
        <begin position="344"/>
        <end position="364"/>
    </location>
</feature>
<feature type="topological domain" description="Cytoplasmic" evidence="1">
    <location>
        <begin position="365"/>
        <end position="375"/>
    </location>
</feature>
<feature type="glycosylation site" description="N-linked (GlcNAc...) asparagine" evidence="1">
    <location>
        <position position="193"/>
    </location>
</feature>
<sequence>MPSGSGFHNIEEAGEKARKRDDWIAISNFHPGWFSVNMGTGITAILLQNLPYQFPGLHYIAVVLFILNVIIFFLFLTISITRYCLWPDKFKAMLAHPAHSMLLGTFPMGFATIINCIVFICVPVWGEWASRFAWGLWWIDAAVSVAICYFVPFMLMTKHTSSLETMTAAWLLPIVAPVVAAASGGVVADSLQNDTHALITILVCYAMWGSAVPLAMVILVIYFQRLAIHKLVPRAAIVSALLPIGPLGQGGFGLMQLGVVAKRVFPRLDFLAPIAGDIFYVMGAFIAMIMWGFGLIWLWFALASFTRGKFYFNIGWWAFTFPLGVFTTATTQMGKEFNSPFFDILGTFFSIVVTCMWVLVFALTVYKSCTKELFR</sequence>
<name>SSU1_TRIRU</name>
<dbReference type="EMBL" id="DQ777768">
    <property type="protein sequence ID" value="ABG88187.1"/>
    <property type="molecule type" value="Genomic_DNA"/>
</dbReference>
<dbReference type="SMR" id="A3QUP1"/>
<dbReference type="GlyCosmos" id="A3QUP1">
    <property type="glycosylation" value="1 site, No reported glycans"/>
</dbReference>
<dbReference type="VEuPathDB" id="FungiDB:TERG_02694"/>
<dbReference type="GO" id="GO:0005886">
    <property type="term" value="C:plasma membrane"/>
    <property type="evidence" value="ECO:0007669"/>
    <property type="project" value="UniProtKB-SubCell"/>
</dbReference>
<dbReference type="GO" id="GO:0000319">
    <property type="term" value="F:sulfite transmembrane transporter activity"/>
    <property type="evidence" value="ECO:0007669"/>
    <property type="project" value="TreeGrafter"/>
</dbReference>
<dbReference type="CDD" id="cd09318">
    <property type="entry name" value="TDT_SSU1"/>
    <property type="match status" value="1"/>
</dbReference>
<dbReference type="FunFam" id="1.50.10.150:FF:000004">
    <property type="entry name" value="Malic acid transporter"/>
    <property type="match status" value="1"/>
</dbReference>
<dbReference type="Gene3D" id="1.50.10.150">
    <property type="entry name" value="Voltage-dependent anion channel"/>
    <property type="match status" value="1"/>
</dbReference>
<dbReference type="InterPro" id="IPR004695">
    <property type="entry name" value="SLAC1/Mae1/Ssu1/TehA"/>
</dbReference>
<dbReference type="InterPro" id="IPR051629">
    <property type="entry name" value="Sulfite_efflux_TDT"/>
</dbReference>
<dbReference type="InterPro" id="IPR038665">
    <property type="entry name" value="Voltage-dep_anion_channel_sf"/>
</dbReference>
<dbReference type="PANTHER" id="PTHR31686">
    <property type="match status" value="1"/>
</dbReference>
<dbReference type="PANTHER" id="PTHR31686:SF1">
    <property type="entry name" value="SULFITE EFFLUX PUMP SSU1"/>
    <property type="match status" value="1"/>
</dbReference>
<dbReference type="Pfam" id="PF03595">
    <property type="entry name" value="SLAC1"/>
    <property type="match status" value="1"/>
</dbReference>
<accession>A3QUP1</accession>